<reference key="1">
    <citation type="journal article" date="1995" name="Science">
        <title>Whole-genome random sequencing and assembly of Haemophilus influenzae Rd.</title>
        <authorList>
            <person name="Fleischmann R.D."/>
            <person name="Adams M.D."/>
            <person name="White O."/>
            <person name="Clayton R.A."/>
            <person name="Kirkness E.F."/>
            <person name="Kerlavage A.R."/>
            <person name="Bult C.J."/>
            <person name="Tomb J.-F."/>
            <person name="Dougherty B.A."/>
            <person name="Merrick J.M."/>
            <person name="McKenney K."/>
            <person name="Sutton G.G."/>
            <person name="FitzHugh W."/>
            <person name="Fields C.A."/>
            <person name="Gocayne J.D."/>
            <person name="Scott J.D."/>
            <person name="Shirley R."/>
            <person name="Liu L.-I."/>
            <person name="Glodek A."/>
            <person name="Kelley J.M."/>
            <person name="Weidman J.F."/>
            <person name="Phillips C.A."/>
            <person name="Spriggs T."/>
            <person name="Hedblom E."/>
            <person name="Cotton M.D."/>
            <person name="Utterback T.R."/>
            <person name="Hanna M.C."/>
            <person name="Nguyen D.T."/>
            <person name="Saudek D.M."/>
            <person name="Brandon R.C."/>
            <person name="Fine L.D."/>
            <person name="Fritchman J.L."/>
            <person name="Fuhrmann J.L."/>
            <person name="Geoghagen N.S.M."/>
            <person name="Gnehm C.L."/>
            <person name="McDonald L.A."/>
            <person name="Small K.V."/>
            <person name="Fraser C.M."/>
            <person name="Smith H.O."/>
            <person name="Venter J.C."/>
        </authorList>
    </citation>
    <scope>NUCLEOTIDE SEQUENCE [LARGE SCALE GENOMIC DNA]</scope>
    <source>
        <strain>ATCC 51907 / DSM 11121 / KW20 / Rd</strain>
    </source>
</reference>
<protein>
    <recommendedName>
        <fullName>Uncharacterized protein HI_0925</fullName>
    </recommendedName>
</protein>
<sequence length="121" mass="14589">MQPYEKYLKLNSQKLRADQTDTERKLWQRINRDQLLGFRFNRQKPLLSYIVDFYCAKTKLIIELDGSQHYKPDYQEKDALRDAELNSLGFTVMRFSNDEVMREIEAVVEQIYLFLENVRTD</sequence>
<organism>
    <name type="scientific">Haemophilus influenzae (strain ATCC 51907 / DSM 11121 / KW20 / Rd)</name>
    <dbReference type="NCBI Taxonomy" id="71421"/>
    <lineage>
        <taxon>Bacteria</taxon>
        <taxon>Pseudomonadati</taxon>
        <taxon>Pseudomonadota</taxon>
        <taxon>Gammaproteobacteria</taxon>
        <taxon>Pasteurellales</taxon>
        <taxon>Pasteurellaceae</taxon>
        <taxon>Haemophilus</taxon>
    </lineage>
</organism>
<name>Y925_HAEIN</name>
<comment type="similarity">
    <text evidence="1">To E.coli YcjD and H.influenzae HI_1162.</text>
</comment>
<proteinExistence type="predicted"/>
<dbReference type="EMBL" id="L42023">
    <property type="protein sequence ID" value="AAC22585.1"/>
    <property type="molecule type" value="Genomic_DNA"/>
</dbReference>
<dbReference type="PIR" id="C64016">
    <property type="entry name" value="C64016"/>
</dbReference>
<dbReference type="RefSeq" id="NP_439085.1">
    <property type="nucleotide sequence ID" value="NC_000907.1"/>
</dbReference>
<dbReference type="SMR" id="P44075"/>
<dbReference type="STRING" id="71421.HI_0925"/>
<dbReference type="DNASU" id="950812"/>
<dbReference type="EnsemblBacteria" id="AAC22585">
    <property type="protein sequence ID" value="AAC22585"/>
    <property type="gene ID" value="HI_0925"/>
</dbReference>
<dbReference type="KEGG" id="hin:HI_0925"/>
<dbReference type="PATRIC" id="fig|71421.8.peg.966"/>
<dbReference type="eggNOG" id="COG2852">
    <property type="taxonomic scope" value="Bacteria"/>
</dbReference>
<dbReference type="HOGENOM" id="CLU_107928_1_0_6"/>
<dbReference type="OrthoDB" id="9798754at2"/>
<dbReference type="PhylomeDB" id="P44075"/>
<dbReference type="BioCyc" id="HINF71421:G1GJ1-965-MONOMER"/>
<dbReference type="Proteomes" id="UP000000579">
    <property type="component" value="Chromosome"/>
</dbReference>
<dbReference type="CDD" id="cd01038">
    <property type="entry name" value="Endonuclease_DUF559"/>
    <property type="match status" value="1"/>
</dbReference>
<dbReference type="Gene3D" id="3.40.960.10">
    <property type="entry name" value="VSR Endonuclease"/>
    <property type="match status" value="1"/>
</dbReference>
<dbReference type="InterPro" id="IPR007569">
    <property type="entry name" value="DUF559"/>
</dbReference>
<dbReference type="InterPro" id="IPR047216">
    <property type="entry name" value="Endonuclease_DUF559_bact"/>
</dbReference>
<dbReference type="InterPro" id="IPR011335">
    <property type="entry name" value="Restrct_endonuc-II-like"/>
</dbReference>
<dbReference type="PANTHER" id="PTHR38590">
    <property type="entry name" value="BLL0828 PROTEIN"/>
    <property type="match status" value="1"/>
</dbReference>
<dbReference type="PANTHER" id="PTHR38590:SF1">
    <property type="entry name" value="BLL0828 PROTEIN"/>
    <property type="match status" value="1"/>
</dbReference>
<dbReference type="Pfam" id="PF04480">
    <property type="entry name" value="DUF559"/>
    <property type="match status" value="1"/>
</dbReference>
<dbReference type="SUPFAM" id="SSF52980">
    <property type="entry name" value="Restriction endonuclease-like"/>
    <property type="match status" value="1"/>
</dbReference>
<accession>P44075</accession>
<gene>
    <name type="ordered locus">HI_0925</name>
</gene>
<evidence type="ECO:0000305" key="1"/>
<keyword id="KW-1185">Reference proteome</keyword>
<feature type="chain" id="PRO_0000168893" description="Uncharacterized protein HI_0925">
    <location>
        <begin position="1"/>
        <end position="121"/>
    </location>
</feature>